<proteinExistence type="evidence at protein level"/>
<organism>
    <name type="scientific">Bacillus subtilis (strain 168)</name>
    <dbReference type="NCBI Taxonomy" id="224308"/>
    <lineage>
        <taxon>Bacteria</taxon>
        <taxon>Bacillati</taxon>
        <taxon>Bacillota</taxon>
        <taxon>Bacilli</taxon>
        <taxon>Bacillales</taxon>
        <taxon>Bacillaceae</taxon>
        <taxon>Bacillus</taxon>
    </lineage>
</organism>
<dbReference type="EMBL" id="U93874">
    <property type="protein sequence ID" value="AAB80870.1"/>
    <property type="molecule type" value="Genomic_DNA"/>
</dbReference>
<dbReference type="EMBL" id="AL009126">
    <property type="protein sequence ID" value="CAB14655.1"/>
    <property type="molecule type" value="Genomic_DNA"/>
</dbReference>
<dbReference type="PIR" id="D69975">
    <property type="entry name" value="D69975"/>
</dbReference>
<dbReference type="RefSeq" id="NP_390591.1">
    <property type="nucleotide sequence ID" value="NC_000964.3"/>
</dbReference>
<dbReference type="RefSeq" id="WP_004398482.1">
    <property type="nucleotide sequence ID" value="NZ_OZ025638.1"/>
</dbReference>
<dbReference type="PDB" id="5JEN">
    <property type="method" value="X-ray"/>
    <property type="resolution" value="2.30 A"/>
    <property type="chains" value="A/C=60-285"/>
</dbReference>
<dbReference type="PDBsum" id="5JEN"/>
<dbReference type="SMR" id="O05403"/>
<dbReference type="FunCoup" id="O05403">
    <property type="interactions" value="38"/>
</dbReference>
<dbReference type="IntAct" id="O05403">
    <property type="interactions" value="1"/>
</dbReference>
<dbReference type="STRING" id="224308.BSU27130"/>
<dbReference type="PaxDb" id="224308-BSU27130"/>
<dbReference type="EnsemblBacteria" id="CAB14655">
    <property type="protein sequence ID" value="CAB14655"/>
    <property type="gene ID" value="BSU_27130"/>
</dbReference>
<dbReference type="GeneID" id="937593"/>
<dbReference type="KEGG" id="bsu:BSU27130"/>
<dbReference type="PATRIC" id="fig|224308.179.peg.2946"/>
<dbReference type="eggNOG" id="ENOG502Z8Z7">
    <property type="taxonomic scope" value="Bacteria"/>
</dbReference>
<dbReference type="InParanoid" id="O05403"/>
<dbReference type="OrthoDB" id="4990at2"/>
<dbReference type="PhylomeDB" id="O05403"/>
<dbReference type="BioCyc" id="BSUB:BSU27130-MONOMER"/>
<dbReference type="Proteomes" id="UP000001570">
    <property type="component" value="Chromosome"/>
</dbReference>
<dbReference type="GO" id="GO:0005886">
    <property type="term" value="C:plasma membrane"/>
    <property type="evidence" value="ECO:0007669"/>
    <property type="project" value="UniProtKB-SubCell"/>
</dbReference>
<dbReference type="Gene3D" id="3.30.565.40">
    <property type="entry name" value="Fervidobacterium nodosum Rt17-B1 like"/>
    <property type="match status" value="1"/>
</dbReference>
<dbReference type="Gene3D" id="3.90.640.20">
    <property type="entry name" value="Heat-shock cognate protein, ATPase"/>
    <property type="match status" value="1"/>
</dbReference>
<dbReference type="InterPro" id="IPR021729">
    <property type="entry name" value="DUF3298"/>
</dbReference>
<dbReference type="InterPro" id="IPR025303">
    <property type="entry name" value="PdaC"/>
</dbReference>
<dbReference type="InterPro" id="IPR037126">
    <property type="entry name" value="PdaC/RsiV-like_sf"/>
</dbReference>
<dbReference type="Pfam" id="PF11738">
    <property type="entry name" value="DUF3298"/>
    <property type="match status" value="1"/>
</dbReference>
<dbReference type="Pfam" id="PF13739">
    <property type="entry name" value="PdaC"/>
    <property type="match status" value="1"/>
</dbReference>
<sequence>MDKRLQQLREEYKNVQIPKELDIIVEKALQQEPKKKRIVMWPTSAAIAAAILFTALVNINPDAAQAMSKIPVIGKIVKAITFIEIKEEKDQSSIDVKTPALSGLSNKELENSINEKYLKESQQLYKEFIQSTSKNKKGHLSIYSDYETVTDTPDLLSIRRNIETTQASSYTQSRYITIDKKNDILLTLKSLFKDERYIKVISQNIKEQMKQQMKEDPNKIYWLTDEDAEPFKTILPDQTFYITEDHKLVISFDEYEVAPGYMGVTEFTIPTGVISNLLVGERYIR</sequence>
<keyword id="KW-0002">3D-structure</keyword>
<keyword id="KW-1003">Cell membrane</keyword>
<keyword id="KW-0472">Membrane</keyword>
<keyword id="KW-1185">Reference proteome</keyword>
<keyword id="KW-0812">Transmembrane</keyword>
<keyword id="KW-1133">Transmembrane helix</keyword>
<name>RSIV_BACSU</name>
<evidence type="ECO:0000255" key="1"/>
<evidence type="ECO:0000269" key="2">
    <source>
    </source>
</evidence>
<evidence type="ECO:0000269" key="3">
    <source>
    </source>
</evidence>
<evidence type="ECO:0000305" key="4"/>
<evidence type="ECO:0007829" key="5">
    <source>
        <dbReference type="PDB" id="5JEN"/>
    </source>
</evidence>
<reference key="1">
    <citation type="journal article" date="1997" name="Microbiology">
        <title>Sequence of the Bacillus subtilis genome region in the vicinity of the lev operon reveals two new extracytoplasmic function RNA polymerase sigma factors SigV and SigZ.</title>
        <authorList>
            <person name="Sorokin A."/>
            <person name="Bolotin A."/>
            <person name="Purnelle B."/>
            <person name="Hilbert H."/>
            <person name="Lauber J."/>
            <person name="Duesterhoeft A."/>
            <person name="Ehrlich S.D."/>
        </authorList>
    </citation>
    <scope>NUCLEOTIDE SEQUENCE [GENOMIC DNA]</scope>
    <source>
        <strain>168</strain>
    </source>
</reference>
<reference key="2">
    <citation type="journal article" date="1997" name="Nature">
        <title>The complete genome sequence of the Gram-positive bacterium Bacillus subtilis.</title>
        <authorList>
            <person name="Kunst F."/>
            <person name="Ogasawara N."/>
            <person name="Moszer I."/>
            <person name="Albertini A.M."/>
            <person name="Alloni G."/>
            <person name="Azevedo V."/>
            <person name="Bertero M.G."/>
            <person name="Bessieres P."/>
            <person name="Bolotin A."/>
            <person name="Borchert S."/>
            <person name="Borriss R."/>
            <person name="Boursier L."/>
            <person name="Brans A."/>
            <person name="Braun M."/>
            <person name="Brignell S.C."/>
            <person name="Bron S."/>
            <person name="Brouillet S."/>
            <person name="Bruschi C.V."/>
            <person name="Caldwell B."/>
            <person name="Capuano V."/>
            <person name="Carter N.M."/>
            <person name="Choi S.-K."/>
            <person name="Codani J.-J."/>
            <person name="Connerton I.F."/>
            <person name="Cummings N.J."/>
            <person name="Daniel R.A."/>
            <person name="Denizot F."/>
            <person name="Devine K.M."/>
            <person name="Duesterhoeft A."/>
            <person name="Ehrlich S.D."/>
            <person name="Emmerson P.T."/>
            <person name="Entian K.-D."/>
            <person name="Errington J."/>
            <person name="Fabret C."/>
            <person name="Ferrari E."/>
            <person name="Foulger D."/>
            <person name="Fritz C."/>
            <person name="Fujita M."/>
            <person name="Fujita Y."/>
            <person name="Fuma S."/>
            <person name="Galizzi A."/>
            <person name="Galleron N."/>
            <person name="Ghim S.-Y."/>
            <person name="Glaser P."/>
            <person name="Goffeau A."/>
            <person name="Golightly E.J."/>
            <person name="Grandi G."/>
            <person name="Guiseppi G."/>
            <person name="Guy B.J."/>
            <person name="Haga K."/>
            <person name="Haiech J."/>
            <person name="Harwood C.R."/>
            <person name="Henaut A."/>
            <person name="Hilbert H."/>
            <person name="Holsappel S."/>
            <person name="Hosono S."/>
            <person name="Hullo M.-F."/>
            <person name="Itaya M."/>
            <person name="Jones L.-M."/>
            <person name="Joris B."/>
            <person name="Karamata D."/>
            <person name="Kasahara Y."/>
            <person name="Klaerr-Blanchard M."/>
            <person name="Klein C."/>
            <person name="Kobayashi Y."/>
            <person name="Koetter P."/>
            <person name="Koningstein G."/>
            <person name="Krogh S."/>
            <person name="Kumano M."/>
            <person name="Kurita K."/>
            <person name="Lapidus A."/>
            <person name="Lardinois S."/>
            <person name="Lauber J."/>
            <person name="Lazarevic V."/>
            <person name="Lee S.-M."/>
            <person name="Levine A."/>
            <person name="Liu H."/>
            <person name="Masuda S."/>
            <person name="Mauel C."/>
            <person name="Medigue C."/>
            <person name="Medina N."/>
            <person name="Mellado R.P."/>
            <person name="Mizuno M."/>
            <person name="Moestl D."/>
            <person name="Nakai S."/>
            <person name="Noback M."/>
            <person name="Noone D."/>
            <person name="O'Reilly M."/>
            <person name="Ogawa K."/>
            <person name="Ogiwara A."/>
            <person name="Oudega B."/>
            <person name="Park S.-H."/>
            <person name="Parro V."/>
            <person name="Pohl T.M."/>
            <person name="Portetelle D."/>
            <person name="Porwollik S."/>
            <person name="Prescott A.M."/>
            <person name="Presecan E."/>
            <person name="Pujic P."/>
            <person name="Purnelle B."/>
            <person name="Rapoport G."/>
            <person name="Rey M."/>
            <person name="Reynolds S."/>
            <person name="Rieger M."/>
            <person name="Rivolta C."/>
            <person name="Rocha E."/>
            <person name="Roche B."/>
            <person name="Rose M."/>
            <person name="Sadaie Y."/>
            <person name="Sato T."/>
            <person name="Scanlan E."/>
            <person name="Schleich S."/>
            <person name="Schroeter R."/>
            <person name="Scoffone F."/>
            <person name="Sekiguchi J."/>
            <person name="Sekowska A."/>
            <person name="Seror S.J."/>
            <person name="Serror P."/>
            <person name="Shin B.-S."/>
            <person name="Soldo B."/>
            <person name="Sorokin A."/>
            <person name="Tacconi E."/>
            <person name="Takagi T."/>
            <person name="Takahashi H."/>
            <person name="Takemaru K."/>
            <person name="Takeuchi M."/>
            <person name="Tamakoshi A."/>
            <person name="Tanaka T."/>
            <person name="Terpstra P."/>
            <person name="Tognoni A."/>
            <person name="Tosato V."/>
            <person name="Uchiyama S."/>
            <person name="Vandenbol M."/>
            <person name="Vannier F."/>
            <person name="Vassarotti A."/>
            <person name="Viari A."/>
            <person name="Wambutt R."/>
            <person name="Wedler E."/>
            <person name="Wedler H."/>
            <person name="Weitzenegger T."/>
            <person name="Winters P."/>
            <person name="Wipat A."/>
            <person name="Yamamoto H."/>
            <person name="Yamane K."/>
            <person name="Yasumoto K."/>
            <person name="Yata K."/>
            <person name="Yoshida K."/>
            <person name="Yoshikawa H.-F."/>
            <person name="Zumstein E."/>
            <person name="Yoshikawa H."/>
            <person name="Danchin A."/>
        </authorList>
    </citation>
    <scope>NUCLEOTIDE SEQUENCE [LARGE SCALE GENOMIC DNA]</scope>
    <source>
        <strain>168</strain>
    </source>
</reference>
<reference key="3">
    <citation type="journal article" date="2004" name="Microbiology">
        <title>Interaction of Bacillus subtilis extracytoplasmic function (ECF) sigma factors with the N-terminal regions of their potential anti-sigma factors.</title>
        <authorList>
            <person name="Yoshimura M."/>
            <person name="Asai K."/>
            <person name="Sadaie Y."/>
            <person name="Yoshikawa H."/>
        </authorList>
    </citation>
    <scope>INTERACTION WITH SIGV</scope>
    <source>
        <strain>168</strain>
    </source>
</reference>
<reference key="4">
    <citation type="journal article" date="2005" name="FEMS Microbiol. Lett.">
        <title>Identification of sigmaV-dependent genes of Bacillus subtilis.</title>
        <authorList>
            <person name="Zellmeier S."/>
            <person name="Hofmann C."/>
            <person name="Thomas S."/>
            <person name="Wiegert T."/>
            <person name="Schumann W."/>
        </authorList>
    </citation>
    <scope>FUNCTION AS ANTI-FACTOR OF SIGV</scope>
    <source>
        <strain>168 / Marburg / ATCC 6051 / DSM 10 / JCM 1465 / NBRC 13719 / NCIMB 3610 / NRRL NRS-744 / VKM B-501</strain>
    </source>
</reference>
<comment type="function">
    <text evidence="3">Anti-sigma factor for SigV. Negatively regulates SigV activity through direct interaction.</text>
</comment>
<comment type="subunit">
    <text evidence="2">Interacts (via N-terminal region) with SigV.</text>
</comment>
<comment type="subcellular location">
    <subcellularLocation>
        <location evidence="4">Cell membrane</location>
        <topology evidence="4">Single-pass membrane protein</topology>
    </subcellularLocation>
</comment>
<comment type="similarity">
    <text evidence="4">Belongs to the RsiV family.</text>
</comment>
<protein>
    <recommendedName>
        <fullName>Anti-sigma-V factor RsiV</fullName>
    </recommendedName>
</protein>
<feature type="chain" id="PRO_0000380591" description="Anti-sigma-V factor RsiV">
    <location>
        <begin position="1"/>
        <end position="285"/>
    </location>
</feature>
<feature type="topological domain" description="Cytoplasmic" evidence="1">
    <location>
        <begin position="1"/>
        <end position="37"/>
    </location>
</feature>
<feature type="transmembrane region" description="Helical" evidence="1">
    <location>
        <begin position="38"/>
        <end position="58"/>
    </location>
</feature>
<feature type="topological domain" description="Extracellular" evidence="1">
    <location>
        <begin position="59"/>
        <end position="285"/>
    </location>
</feature>
<feature type="strand" evidence="5">
    <location>
        <begin position="78"/>
        <end position="89"/>
    </location>
</feature>
<feature type="strand" evidence="5">
    <location>
        <begin position="92"/>
        <end position="102"/>
    </location>
</feature>
<feature type="helix" evidence="5">
    <location>
        <begin position="107"/>
        <end position="131"/>
    </location>
</feature>
<feature type="strand" evidence="5">
    <location>
        <begin position="133"/>
        <end position="135"/>
    </location>
</feature>
<feature type="strand" evidence="5">
    <location>
        <begin position="140"/>
        <end position="151"/>
    </location>
</feature>
<feature type="strand" evidence="5">
    <location>
        <begin position="153"/>
        <end position="179"/>
    </location>
</feature>
<feature type="turn" evidence="5">
    <location>
        <begin position="180"/>
        <end position="183"/>
    </location>
</feature>
<feature type="helix" evidence="5">
    <location>
        <begin position="189"/>
        <end position="191"/>
    </location>
</feature>
<feature type="strand" evidence="5">
    <location>
        <begin position="192"/>
        <end position="194"/>
    </location>
</feature>
<feature type="helix" evidence="5">
    <location>
        <begin position="197"/>
        <end position="215"/>
    </location>
</feature>
<feature type="strand" evidence="5">
    <location>
        <begin position="222"/>
        <end position="224"/>
    </location>
</feature>
<feature type="strand" evidence="5">
    <location>
        <begin position="240"/>
        <end position="242"/>
    </location>
</feature>
<feature type="strand" evidence="5">
    <location>
        <begin position="248"/>
        <end position="252"/>
    </location>
</feature>
<feature type="turn" evidence="5">
    <location>
        <begin position="254"/>
        <end position="256"/>
    </location>
</feature>
<feature type="helix" evidence="5">
    <location>
        <begin position="260"/>
        <end position="262"/>
    </location>
</feature>
<feature type="strand" evidence="5">
    <location>
        <begin position="264"/>
        <end position="269"/>
    </location>
</feature>
<feature type="helix" evidence="5">
    <location>
        <begin position="271"/>
        <end position="274"/>
    </location>
</feature>
<feature type="helix" evidence="5">
    <location>
        <begin position="275"/>
        <end position="277"/>
    </location>
</feature>
<feature type="strand" evidence="5">
    <location>
        <begin position="281"/>
        <end position="283"/>
    </location>
</feature>
<gene>
    <name type="primary">rsiV</name>
    <name type="synonym">yrhM</name>
    <name type="ordered locus">BSU27130</name>
</gene>
<accession>O05403</accession>
<accession>Q795Y8</accession>